<name>PUR9_SALAR</name>
<dbReference type="EC" id="2.1.2.3" evidence="1"/>
<dbReference type="EC" id="3.5.4.10" evidence="1"/>
<dbReference type="EMBL" id="CP000880">
    <property type="protein sequence ID" value="ABX23306.1"/>
    <property type="molecule type" value="Genomic_DNA"/>
</dbReference>
<dbReference type="SMR" id="A9MHC3"/>
<dbReference type="STRING" id="41514.SARI_03481"/>
<dbReference type="KEGG" id="ses:SARI_03481"/>
<dbReference type="HOGENOM" id="CLU_016316_5_2_6"/>
<dbReference type="UniPathway" id="UPA00074">
    <property type="reaction ID" value="UER00133"/>
</dbReference>
<dbReference type="UniPathway" id="UPA00074">
    <property type="reaction ID" value="UER00135"/>
</dbReference>
<dbReference type="Proteomes" id="UP000002084">
    <property type="component" value="Chromosome"/>
</dbReference>
<dbReference type="GO" id="GO:0005829">
    <property type="term" value="C:cytosol"/>
    <property type="evidence" value="ECO:0007669"/>
    <property type="project" value="TreeGrafter"/>
</dbReference>
<dbReference type="GO" id="GO:0003937">
    <property type="term" value="F:IMP cyclohydrolase activity"/>
    <property type="evidence" value="ECO:0007669"/>
    <property type="project" value="UniProtKB-UniRule"/>
</dbReference>
<dbReference type="GO" id="GO:0004643">
    <property type="term" value="F:phosphoribosylaminoimidazolecarboxamide formyltransferase activity"/>
    <property type="evidence" value="ECO:0007669"/>
    <property type="project" value="UniProtKB-UniRule"/>
</dbReference>
<dbReference type="GO" id="GO:0006189">
    <property type="term" value="P:'de novo' IMP biosynthetic process"/>
    <property type="evidence" value="ECO:0007669"/>
    <property type="project" value="UniProtKB-UniRule"/>
</dbReference>
<dbReference type="CDD" id="cd01421">
    <property type="entry name" value="IMPCH"/>
    <property type="match status" value="1"/>
</dbReference>
<dbReference type="FunFam" id="3.40.140.20:FF:000001">
    <property type="entry name" value="Bifunctional purine biosynthesis protein PurH"/>
    <property type="match status" value="1"/>
</dbReference>
<dbReference type="FunFam" id="3.40.140.20:FF:000002">
    <property type="entry name" value="Bifunctional purine biosynthesis protein PurH"/>
    <property type="match status" value="1"/>
</dbReference>
<dbReference type="FunFam" id="3.40.50.1380:FF:000001">
    <property type="entry name" value="Bifunctional purine biosynthesis protein PurH"/>
    <property type="match status" value="1"/>
</dbReference>
<dbReference type="Gene3D" id="3.40.140.20">
    <property type="match status" value="2"/>
</dbReference>
<dbReference type="Gene3D" id="3.40.50.1380">
    <property type="entry name" value="Methylglyoxal synthase-like domain"/>
    <property type="match status" value="1"/>
</dbReference>
<dbReference type="HAMAP" id="MF_00139">
    <property type="entry name" value="PurH"/>
    <property type="match status" value="1"/>
</dbReference>
<dbReference type="InterPro" id="IPR024051">
    <property type="entry name" value="AICAR_Tfase_dup_dom_sf"/>
</dbReference>
<dbReference type="InterPro" id="IPR016193">
    <property type="entry name" value="Cytidine_deaminase-like"/>
</dbReference>
<dbReference type="InterPro" id="IPR011607">
    <property type="entry name" value="MGS-like_dom"/>
</dbReference>
<dbReference type="InterPro" id="IPR036914">
    <property type="entry name" value="MGS-like_dom_sf"/>
</dbReference>
<dbReference type="InterPro" id="IPR002695">
    <property type="entry name" value="PurH-like"/>
</dbReference>
<dbReference type="NCBIfam" id="NF002049">
    <property type="entry name" value="PRK00881.1"/>
    <property type="match status" value="1"/>
</dbReference>
<dbReference type="NCBIfam" id="TIGR00355">
    <property type="entry name" value="purH"/>
    <property type="match status" value="1"/>
</dbReference>
<dbReference type="PANTHER" id="PTHR11692:SF0">
    <property type="entry name" value="BIFUNCTIONAL PURINE BIOSYNTHESIS PROTEIN ATIC"/>
    <property type="match status" value="1"/>
</dbReference>
<dbReference type="PANTHER" id="PTHR11692">
    <property type="entry name" value="BIFUNCTIONAL PURINE BIOSYNTHESIS PROTEIN PURH"/>
    <property type="match status" value="1"/>
</dbReference>
<dbReference type="Pfam" id="PF01808">
    <property type="entry name" value="AICARFT_IMPCHas"/>
    <property type="match status" value="1"/>
</dbReference>
<dbReference type="Pfam" id="PF02142">
    <property type="entry name" value="MGS"/>
    <property type="match status" value="1"/>
</dbReference>
<dbReference type="PIRSF" id="PIRSF000414">
    <property type="entry name" value="AICARFT_IMPCHas"/>
    <property type="match status" value="1"/>
</dbReference>
<dbReference type="SMART" id="SM00798">
    <property type="entry name" value="AICARFT_IMPCHas"/>
    <property type="match status" value="1"/>
</dbReference>
<dbReference type="SMART" id="SM00851">
    <property type="entry name" value="MGS"/>
    <property type="match status" value="1"/>
</dbReference>
<dbReference type="SUPFAM" id="SSF53927">
    <property type="entry name" value="Cytidine deaminase-like"/>
    <property type="match status" value="1"/>
</dbReference>
<dbReference type="SUPFAM" id="SSF52335">
    <property type="entry name" value="Methylglyoxal synthase-like"/>
    <property type="match status" value="1"/>
</dbReference>
<dbReference type="PROSITE" id="PS51855">
    <property type="entry name" value="MGS"/>
    <property type="match status" value="1"/>
</dbReference>
<proteinExistence type="inferred from homology"/>
<gene>
    <name evidence="1" type="primary">purH</name>
    <name type="ordered locus">SARI_03481</name>
</gene>
<sequence>MQQRRSVRRALLSVSDKAGIVEFAQALSARGVELLSTGGTARLLAEKGLPVTEVSDYTGFPEMMDGRVKTLHPKVHGGILGRRGQDDGIMEQHGIAPIDMVVVNLYPFAETVAHVGCSLEDAVENIDIGGPTMVRSAAKNHKDVAIVVKSSDYDAIINEMDANEGSLLLETRFDLAIKAFEHTAAYDSMIANYFGSMVPAYHGESKEAAGRFPRTLNLNFIKKQDMRYGENSHQQAAFYIEENVKEASVATAQQVQGKALSYNNIADTDAALECVKAFSEPACVIVKHANPCGVAVSASILDAYDRAYKTDPTSAFGGIIAFNRELDAETAQAIISRQFVEVIIAPSATEEALKITAAKQNVRVLTCGQWAQRVPGLDFKRVNGGLLVQDRDLGMVSERELRVVSKRQPTEQELRDALFCWKVAKFVKSNAIVYAKENMTIGIGAGQMSRVYSAKIAGIKAADEGLEVQGSAMASDAFFPFRDGIDAAAAVGVSCVIQPGGSIRDDEVIAAADEHGIAMIFTDMRHFRH</sequence>
<protein>
    <recommendedName>
        <fullName evidence="1">Bifunctional purine biosynthesis protein PurH</fullName>
    </recommendedName>
    <domain>
        <recommendedName>
            <fullName evidence="1">Phosphoribosylaminoimidazolecarboxamide formyltransferase</fullName>
            <ecNumber evidence="1">2.1.2.3</ecNumber>
        </recommendedName>
        <alternativeName>
            <fullName evidence="1">AICAR transformylase</fullName>
        </alternativeName>
    </domain>
    <domain>
        <recommendedName>
            <fullName evidence="1">IMP cyclohydrolase</fullName>
            <ecNumber evidence="1">3.5.4.10</ecNumber>
        </recommendedName>
        <alternativeName>
            <fullName evidence="1">ATIC</fullName>
        </alternativeName>
        <alternativeName>
            <fullName evidence="1">IMP synthase</fullName>
        </alternativeName>
        <alternativeName>
            <fullName evidence="1">Inosinicase</fullName>
        </alternativeName>
    </domain>
</protein>
<accession>A9MHC3</accession>
<keyword id="KW-0378">Hydrolase</keyword>
<keyword id="KW-0511">Multifunctional enzyme</keyword>
<keyword id="KW-0658">Purine biosynthesis</keyword>
<keyword id="KW-1185">Reference proteome</keyword>
<keyword id="KW-0808">Transferase</keyword>
<organism>
    <name type="scientific">Salmonella arizonae (strain ATCC BAA-731 / CDC346-86 / RSK2980)</name>
    <dbReference type="NCBI Taxonomy" id="41514"/>
    <lineage>
        <taxon>Bacteria</taxon>
        <taxon>Pseudomonadati</taxon>
        <taxon>Pseudomonadota</taxon>
        <taxon>Gammaproteobacteria</taxon>
        <taxon>Enterobacterales</taxon>
        <taxon>Enterobacteriaceae</taxon>
        <taxon>Salmonella</taxon>
    </lineage>
</organism>
<evidence type="ECO:0000255" key="1">
    <source>
        <dbReference type="HAMAP-Rule" id="MF_00139"/>
    </source>
</evidence>
<evidence type="ECO:0000255" key="2">
    <source>
        <dbReference type="PROSITE-ProRule" id="PRU01202"/>
    </source>
</evidence>
<reference key="1">
    <citation type="submission" date="2007-11" db="EMBL/GenBank/DDBJ databases">
        <authorList>
            <consortium name="The Salmonella enterica serovar Arizonae Genome Sequencing Project"/>
            <person name="McClelland M."/>
            <person name="Sanderson E.K."/>
            <person name="Porwollik S."/>
            <person name="Spieth J."/>
            <person name="Clifton W.S."/>
            <person name="Fulton R."/>
            <person name="Chunyan W."/>
            <person name="Wollam A."/>
            <person name="Shah N."/>
            <person name="Pepin K."/>
            <person name="Bhonagiri V."/>
            <person name="Nash W."/>
            <person name="Johnson M."/>
            <person name="Thiruvilangam P."/>
            <person name="Wilson R."/>
        </authorList>
    </citation>
    <scope>NUCLEOTIDE SEQUENCE [LARGE SCALE GENOMIC DNA]</scope>
    <source>
        <strain>ATCC BAA-731 / CDC346-86 / RSK2980</strain>
    </source>
</reference>
<comment type="catalytic activity">
    <reaction evidence="1">
        <text>(6R)-10-formyltetrahydrofolate + 5-amino-1-(5-phospho-beta-D-ribosyl)imidazole-4-carboxamide = 5-formamido-1-(5-phospho-D-ribosyl)imidazole-4-carboxamide + (6S)-5,6,7,8-tetrahydrofolate</text>
        <dbReference type="Rhea" id="RHEA:22192"/>
        <dbReference type="ChEBI" id="CHEBI:57453"/>
        <dbReference type="ChEBI" id="CHEBI:58467"/>
        <dbReference type="ChEBI" id="CHEBI:58475"/>
        <dbReference type="ChEBI" id="CHEBI:195366"/>
        <dbReference type="EC" id="2.1.2.3"/>
    </reaction>
</comment>
<comment type="catalytic activity">
    <reaction evidence="1">
        <text>IMP + H2O = 5-formamido-1-(5-phospho-D-ribosyl)imidazole-4-carboxamide</text>
        <dbReference type="Rhea" id="RHEA:18445"/>
        <dbReference type="ChEBI" id="CHEBI:15377"/>
        <dbReference type="ChEBI" id="CHEBI:58053"/>
        <dbReference type="ChEBI" id="CHEBI:58467"/>
        <dbReference type="EC" id="3.5.4.10"/>
    </reaction>
</comment>
<comment type="pathway">
    <text evidence="1">Purine metabolism; IMP biosynthesis via de novo pathway; 5-formamido-1-(5-phospho-D-ribosyl)imidazole-4-carboxamide from 5-amino-1-(5-phospho-D-ribosyl)imidazole-4-carboxamide (10-formyl THF route): step 1/1.</text>
</comment>
<comment type="pathway">
    <text evidence="1">Purine metabolism; IMP biosynthesis via de novo pathway; IMP from 5-formamido-1-(5-phospho-D-ribosyl)imidazole-4-carboxamide: step 1/1.</text>
</comment>
<comment type="domain">
    <text evidence="1">The IMP cyclohydrolase activity resides in the N-terminal region.</text>
</comment>
<comment type="similarity">
    <text evidence="1">Belongs to the PurH family.</text>
</comment>
<feature type="chain" id="PRO_1000076491" description="Bifunctional purine biosynthesis protein PurH">
    <location>
        <begin position="1"/>
        <end position="529"/>
    </location>
</feature>
<feature type="domain" description="MGS-like" evidence="2">
    <location>
        <begin position="1"/>
        <end position="148"/>
    </location>
</feature>